<reference evidence="7" key="1">
    <citation type="journal article" date="1996" name="DNA Res.">
        <title>Sequence analysis of the genome of the unicellular cyanobacterium Synechocystis sp. strain PCC6803. II. Sequence determination of the entire genome and assignment of potential protein-coding regions.</title>
        <authorList>
            <person name="Kaneko T."/>
            <person name="Sato S."/>
            <person name="Kotani H."/>
            <person name="Tanaka A."/>
            <person name="Asamizu E."/>
            <person name="Nakamura Y."/>
            <person name="Miyajima N."/>
            <person name="Hirosawa M."/>
            <person name="Sugiura M."/>
            <person name="Sasamoto S."/>
            <person name="Kimura T."/>
            <person name="Hosouchi T."/>
            <person name="Matsuno A."/>
            <person name="Muraki A."/>
            <person name="Nakazaki N."/>
            <person name="Naruo K."/>
            <person name="Okumura S."/>
            <person name="Shimpo S."/>
            <person name="Takeuchi C."/>
            <person name="Wada T."/>
            <person name="Watanabe A."/>
            <person name="Yamada M."/>
            <person name="Yasuda M."/>
            <person name="Tabata S."/>
        </authorList>
    </citation>
    <scope>NUCLEOTIDE SEQUENCE [LARGE SCALE GENOMIC DNA]</scope>
    <source>
        <strain>ATCC 27184 / PCC 6803 / Kazusa</strain>
    </source>
</reference>
<reference key="2">
    <citation type="journal article" date="2013" name="Microbiology">
        <title>Biochemical analysis of three putative KaiC clock proteins from Synechocystis sp. PCC 6803 suggests their functional divergence.</title>
        <authorList>
            <person name="Wiegard A."/>
            <person name="Doerrich A.K."/>
            <person name="Deinzer H.T."/>
            <person name="Beck C."/>
            <person name="Wilde A."/>
            <person name="Holtzendorff J."/>
            <person name="Axmann I.M."/>
        </authorList>
    </citation>
    <scope>NOMENCLATURE</scope>
    <source>
        <strain>ATCC 27184 / PCC 6803 / Kazusa</strain>
    </source>
</reference>
<reference key="3">
    <citation type="journal article" date="2014" name="Microbiology">
        <title>Deletion of the Synechocystis sp. PCC 6803 kaiAB1C1 gene cluster causes impaired cell growth under light-dark conditions.</title>
        <authorList>
            <person name="Doerrich A.K."/>
            <person name="Mitschke J."/>
            <person name="Siadat O."/>
            <person name="Wilde A."/>
        </authorList>
    </citation>
    <scope>FUNCTION</scope>
    <scope>DISRUPTION PHENOTYPE</scope>
    <source>
        <strain>ATCC 27184 / PCC 6803 / Kazusa</strain>
    </source>
</reference>
<reference key="4">
    <citation type="journal article" date="2020" name="J. Bacteriol.">
        <title>Synechocystis KaiC3 Displays Temperature- and KaiB-Dependent ATPase Activity and Is Important for Growth in Darkness.</title>
        <authorList>
            <person name="Wiegard A."/>
            <person name="Koebler C."/>
            <person name="Oyama K."/>
            <person name="Doerrich A.K."/>
            <person name="Azai C."/>
            <person name="Terauchi K."/>
            <person name="Wilde A."/>
            <person name="Axmann I.M."/>
        </authorList>
    </citation>
    <scope>INTERACTION WITH KAIC1 AND KAIC3</scope>
    <scope>SUBUNIT</scope>
    <source>
        <strain>ATCC 27184 / PCC 6803 / Kazusa</strain>
    </source>
</reference>
<reference evidence="8" key="5">
    <citation type="journal article" date="2005" name="J. Biol. Chem.">
        <title>Tetrameric architecture of the circadian clock protein KaiB. A novel interface for intermolecular interactions and its impact on the circadian rhythm.</title>
        <authorList>
            <person name="Hitomi K."/>
            <person name="Oyama T."/>
            <person name="Han S."/>
            <person name="Arvai A.S."/>
            <person name="Getzoff E.D."/>
        </authorList>
    </citation>
    <scope>X-RAY CRYSTALLOGRAPHY (1.90 ANGSTROMS)</scope>
    <scope>FUNCTION</scope>
    <scope>SUBUNIT</scope>
    <scope>MUTAGENESIS OF ASP-91</scope>
    <source>
        <strain>ATCC 27184 / PCC 6803 / Kazusa</strain>
    </source>
</reference>
<dbReference type="EMBL" id="BA000022">
    <property type="protein sequence ID" value="BAA18761.1"/>
    <property type="molecule type" value="Genomic_DNA"/>
</dbReference>
<dbReference type="PIR" id="S76849">
    <property type="entry name" value="S76849"/>
</dbReference>
<dbReference type="PDB" id="1WWJ">
    <property type="method" value="X-ray"/>
    <property type="resolution" value="1.90 A"/>
    <property type="chains" value="A/B/C/D=1-105"/>
</dbReference>
<dbReference type="PDBsum" id="1WWJ"/>
<dbReference type="SMR" id="P74645"/>
<dbReference type="STRING" id="1148.gene:10500533"/>
<dbReference type="DrugBank" id="DB03499">
    <property type="generic name" value="D-Malic acid"/>
</dbReference>
<dbReference type="DrugBank" id="DB03366">
    <property type="generic name" value="Imidazole"/>
</dbReference>
<dbReference type="DrugBank" id="DB04455">
    <property type="generic name" value="N,N,N-trimethylglycinium"/>
</dbReference>
<dbReference type="PaxDb" id="1148-1653851"/>
<dbReference type="EnsemblBacteria" id="BAA18761">
    <property type="protein sequence ID" value="BAA18761"/>
    <property type="gene ID" value="BAA18761"/>
</dbReference>
<dbReference type="KEGG" id="syn:slr0757"/>
<dbReference type="eggNOG" id="COG4251">
    <property type="taxonomic scope" value="Bacteria"/>
</dbReference>
<dbReference type="InParanoid" id="P74645"/>
<dbReference type="PhylomeDB" id="P74645"/>
<dbReference type="EvolutionaryTrace" id="P74645"/>
<dbReference type="Proteomes" id="UP000001425">
    <property type="component" value="Chromosome"/>
</dbReference>
<dbReference type="GO" id="GO:0042802">
    <property type="term" value="F:identical protein binding"/>
    <property type="evidence" value="ECO:0000353"/>
    <property type="project" value="IntAct"/>
</dbReference>
<dbReference type="GO" id="GO:0007623">
    <property type="term" value="P:circadian rhythm"/>
    <property type="evidence" value="ECO:0000315"/>
    <property type="project" value="UniProtKB"/>
</dbReference>
<dbReference type="CDD" id="cd02978">
    <property type="entry name" value="KaiB_like"/>
    <property type="match status" value="1"/>
</dbReference>
<dbReference type="FunFam" id="3.40.30.10:FF:000180">
    <property type="entry name" value="Circadian clock protein KaiB"/>
    <property type="match status" value="1"/>
</dbReference>
<dbReference type="Gene3D" id="3.40.30.10">
    <property type="entry name" value="Glutaredoxin"/>
    <property type="match status" value="1"/>
</dbReference>
<dbReference type="HAMAP" id="MF_01835">
    <property type="entry name" value="KaiB"/>
    <property type="match status" value="1"/>
</dbReference>
<dbReference type="InterPro" id="IPR013474">
    <property type="entry name" value="Circ_KaiB"/>
</dbReference>
<dbReference type="InterPro" id="IPR039022">
    <property type="entry name" value="KaiB-like"/>
</dbReference>
<dbReference type="InterPro" id="IPR011649">
    <property type="entry name" value="KaiB_domain"/>
</dbReference>
<dbReference type="InterPro" id="IPR036249">
    <property type="entry name" value="Thioredoxin-like_sf"/>
</dbReference>
<dbReference type="NCBIfam" id="TIGR02654">
    <property type="entry name" value="circ_KaiB"/>
    <property type="match status" value="1"/>
</dbReference>
<dbReference type="NCBIfam" id="NF006798">
    <property type="entry name" value="PRK09301.1"/>
    <property type="match status" value="1"/>
</dbReference>
<dbReference type="PANTHER" id="PTHR41709:SF2">
    <property type="entry name" value="CIRCADIAN CLOCK PROTEIN KAIB2"/>
    <property type="match status" value="1"/>
</dbReference>
<dbReference type="PANTHER" id="PTHR41709">
    <property type="entry name" value="KAIB-LIKE PROTEIN 1"/>
    <property type="match status" value="1"/>
</dbReference>
<dbReference type="Pfam" id="PF07689">
    <property type="entry name" value="KaiB"/>
    <property type="match status" value="1"/>
</dbReference>
<dbReference type="SMART" id="SM01248">
    <property type="entry name" value="KaiB"/>
    <property type="match status" value="1"/>
</dbReference>
<dbReference type="SUPFAM" id="SSF52833">
    <property type="entry name" value="Thioredoxin-like"/>
    <property type="match status" value="1"/>
</dbReference>
<name>KAIB1_SYNY3</name>
<evidence type="ECO:0000255" key="1">
    <source>
        <dbReference type="HAMAP-Rule" id="MF_01835"/>
    </source>
</evidence>
<evidence type="ECO:0000269" key="2">
    <source>
    </source>
</evidence>
<evidence type="ECO:0000269" key="3">
    <source>
    </source>
</evidence>
<evidence type="ECO:0000269" key="4">
    <source>
    </source>
</evidence>
<evidence type="ECO:0000303" key="5">
    <source>
    </source>
</evidence>
<evidence type="ECO:0000303" key="6">
    <source>
    </source>
</evidence>
<evidence type="ECO:0000312" key="7">
    <source>
        <dbReference type="EMBL" id="BAA18761.1"/>
    </source>
</evidence>
<evidence type="ECO:0007744" key="8">
    <source>
        <dbReference type="PDB" id="1WWJ"/>
    </source>
</evidence>
<evidence type="ECO:0007829" key="9">
    <source>
        <dbReference type="PDB" id="1WWJ"/>
    </source>
</evidence>
<sequence length="105" mass="11935">MSPFKKTYVLKLYVAGNTPNSVRALKMLKNILEQEFQGVYALKVIDVLKNPQLAEEDKILATPTLAKILPPPVRKIIGDLSDREKVLIGLDLLYDEIREREAEDQ</sequence>
<proteinExistence type="evidence at protein level"/>
<organism>
    <name type="scientific">Synechocystis sp. (strain ATCC 27184 / PCC 6803 / Kazusa)</name>
    <dbReference type="NCBI Taxonomy" id="1111708"/>
    <lineage>
        <taxon>Bacteria</taxon>
        <taxon>Bacillati</taxon>
        <taxon>Cyanobacteriota</taxon>
        <taxon>Cyanophyceae</taxon>
        <taxon>Synechococcales</taxon>
        <taxon>Merismopediaceae</taxon>
        <taxon>Synechocystis</taxon>
    </lineage>
</organism>
<protein>
    <recommendedName>
        <fullName evidence="1 5">Circadian clock oscillator protein KaiB1</fullName>
    </recommendedName>
</protein>
<comment type="function">
    <text evidence="1">Key component of the KaiABC oscillator complex, which constitutes the main circadian regulator in cyanobacteria. Complex composition changes during the circadian cycle to control KaiC phosphorylation. KaiA stimulates KaiC autophosphorylation, while KaiB sequesters KaiA, leading to KaiC autodephosphorylation. Phospho-Ser-431 KaiC accumulation triggers binding of KaiB to form the KaiB(6):KaiC(6) complex, leading to changes in output regulators CikA and SasA. KaiB switches to a thioredoxin-like fold (KaiB(fs)) when bound to KaiC. KaiB(6):KaiC(6) formation exposes a site for KaiA binding that sequesters KaiA from KaiC, making the KaiC(6):KaiB(6):KaiA(12) complex that results in KaiC autodephosphorylation.</text>
</comment>
<comment type="function">
    <text evidence="3 4">Component of the oscillator and circadian clock in this organism, enhances fitness in a rhythmic environment (PubMed:25139948). The homotetramer reduces the ATPase activity of KaiC3 by 35% (PubMed:31767776).</text>
</comment>
<comment type="function">
    <text evidence="1">A metamorphic protein which reversibly switches between an inactive tetrameric fold and a rare, thioredoxin-like monomeric fold (KaiB(fs)). KaiB(fs) binds phospho-KaiC, KaiA and CikA. KaiA and CikA compete for binding to KaiB(fs), and KaiB(fs) and SasA compete for binding to KaiC, thus the clock oscillator and output signal pathway are tightly coupled.</text>
</comment>
<comment type="subunit">
    <text evidence="1 2 4">Homotetramer in solution and crystals formed by 2 dimers (PubMed:15716274, PubMed:31767776). Only elutes as a homotetramer in size exclusion chromatography, interacts with KaiC1 and KaiC3 (PubMed:15716274, PubMed:31767776). The KaiABC complex composition changes during the circadian cycle to control KaiC phosphorylation. Complexes KaiC(6), KaiA(2-4):KaiC(6), KaiB(6):KaiC(6) and KaiC(6):KaiB(6):KaiA(12) are among the most important forms, many form cooperatively. Undergoes a major conformational rearrangment; in the free state forms homotetramers as a dimer of dimers. When bound to the CI domain of KaiC switches to a monomeric thioredoxin-fold (KaiB(fs)). KaiB(fs) binds CikA, leading it to dephosphorylate phospho-RpaA (By similarity).</text>
</comment>
<comment type="interaction">
    <interactant intactId="EBI-629476">
        <id>P74645</id>
    </interactant>
    <interactant intactId="EBI-629476">
        <id>P74645</id>
        <label>kaiB1</label>
    </interactant>
    <organismsDiffer>false</organismsDiffer>
    <experiments>2</experiments>
</comment>
<comment type="domain">
    <text evidence="1">Has 2 forms, fold switches to a thioredoxin-like fold (KaiB(fs)) when bound to KaiC.</text>
</comment>
<comment type="disruption phenotype">
    <text evidence="3">A triple kaiA-kaiB1-kaiC1 deletion grows normally under photoautotrophic conditions in continuous light. In a light/dark regime has strongly restricted viability and impaired growth behavior, and overall decreased pigments (after 5-6 days); phenotype is more extreme when grown on 0.2% glucose.</text>
</comment>
<comment type="similarity">
    <text evidence="1">Belongs to the KaiB family.</text>
</comment>
<feature type="chain" id="PRO_0000217771" description="Circadian clock oscillator protein KaiB1">
    <location>
        <begin position="1"/>
        <end position="105"/>
    </location>
</feature>
<feature type="mutagenesis site" description="Severely impairs rhythmicity." evidence="2">
    <original>D</original>
    <variation>G</variation>
    <location>
        <position position="91"/>
    </location>
</feature>
<feature type="strand" evidence="9">
    <location>
        <begin position="6"/>
        <end position="16"/>
    </location>
</feature>
<feature type="helix" evidence="9">
    <location>
        <begin position="19"/>
        <end position="36"/>
    </location>
</feature>
<feature type="strand" evidence="9">
    <location>
        <begin position="39"/>
        <end position="46"/>
    </location>
</feature>
<feature type="turn" evidence="9">
    <location>
        <begin position="47"/>
        <end position="49"/>
    </location>
</feature>
<feature type="strand" evidence="9">
    <location>
        <begin position="58"/>
        <end position="60"/>
    </location>
</feature>
<feature type="helix" evidence="9">
    <location>
        <begin position="62"/>
        <end position="65"/>
    </location>
</feature>
<feature type="helix" evidence="9">
    <location>
        <begin position="66"/>
        <end position="68"/>
    </location>
</feature>
<feature type="helix" evidence="9">
    <location>
        <begin position="71"/>
        <end position="82"/>
    </location>
</feature>
<feature type="strand" evidence="9">
    <location>
        <begin position="87"/>
        <end position="97"/>
    </location>
</feature>
<keyword id="KW-0002">3D-structure</keyword>
<keyword id="KW-0090">Biological rhythms</keyword>
<keyword id="KW-1185">Reference proteome</keyword>
<gene>
    <name evidence="1 6" type="primary">kaiB1</name>
    <name type="ordered locus">slr0757</name>
</gene>
<accession>P74645</accession>